<accession>P39887</accession>
<name>TCMP_STRGA</name>
<feature type="chain" id="PRO_0000072458" description="Tetracenomycin polyketide synthesis O-methyltransferase TcmP">
    <location>
        <begin position="1"/>
        <end position="270"/>
    </location>
</feature>
<dbReference type="EC" id="2.1.1.-"/>
<dbReference type="EMBL" id="M80674">
    <property type="protein sequence ID" value="AAA67510.1"/>
    <property type="status" value="ALT_INIT"/>
    <property type="molecule type" value="Genomic_DNA"/>
</dbReference>
<dbReference type="PIR" id="S27688">
    <property type="entry name" value="C47127"/>
</dbReference>
<dbReference type="RefSeq" id="WP_043504907.1">
    <property type="nucleotide sequence ID" value="NZ_CP009438.1"/>
</dbReference>
<dbReference type="SMR" id="P39887"/>
<dbReference type="STRING" id="1907.SGLAU_26330"/>
<dbReference type="eggNOG" id="COG3315">
    <property type="taxonomic scope" value="Bacteria"/>
</dbReference>
<dbReference type="OrthoDB" id="9800233at2"/>
<dbReference type="BioCyc" id="MetaCyc:MONOMER-18606"/>
<dbReference type="UniPathway" id="UPA00174"/>
<dbReference type="GO" id="GO:0008168">
    <property type="term" value="F:methyltransferase activity"/>
    <property type="evidence" value="ECO:0007669"/>
    <property type="project" value="UniProtKB-KW"/>
</dbReference>
<dbReference type="GO" id="GO:0017000">
    <property type="term" value="P:antibiotic biosynthetic process"/>
    <property type="evidence" value="ECO:0007669"/>
    <property type="project" value="UniProtKB-KW"/>
</dbReference>
<dbReference type="GO" id="GO:0032259">
    <property type="term" value="P:methylation"/>
    <property type="evidence" value="ECO:0007669"/>
    <property type="project" value="UniProtKB-KW"/>
</dbReference>
<dbReference type="Gene3D" id="3.40.50.150">
    <property type="entry name" value="Vaccinia Virus protein VP39"/>
    <property type="match status" value="1"/>
</dbReference>
<dbReference type="InterPro" id="IPR007213">
    <property type="entry name" value="Ppm1/Ppm2/Tcmp"/>
</dbReference>
<dbReference type="InterPro" id="IPR029063">
    <property type="entry name" value="SAM-dependent_MTases_sf"/>
</dbReference>
<dbReference type="InterPro" id="IPR016874">
    <property type="entry name" value="TcmP-like"/>
</dbReference>
<dbReference type="PANTHER" id="PTHR43619">
    <property type="entry name" value="S-ADENOSYL-L-METHIONINE-DEPENDENT METHYLTRANSFERASE YKTD-RELATED"/>
    <property type="match status" value="1"/>
</dbReference>
<dbReference type="PANTHER" id="PTHR43619:SF2">
    <property type="entry name" value="S-ADENOSYL-L-METHIONINE-DEPENDENT METHYLTRANSFERASES SUPERFAMILY PROTEIN"/>
    <property type="match status" value="1"/>
</dbReference>
<dbReference type="Pfam" id="PF04072">
    <property type="entry name" value="LCM"/>
    <property type="match status" value="1"/>
</dbReference>
<dbReference type="PIRSF" id="PIRSF028177">
    <property type="entry name" value="Polyketide_synth_Omtfrase_TcmP"/>
    <property type="match status" value="1"/>
</dbReference>
<dbReference type="SUPFAM" id="SSF53335">
    <property type="entry name" value="S-adenosyl-L-methionine-dependent methyltransferases"/>
    <property type="match status" value="1"/>
</dbReference>
<comment type="function">
    <text>O-methyltransferase that catalyzes the methylation of the C-9 carboxy group of tetracenomycin E (TCM E) to yield TCM A2. Catalyzes as well the following side reactions: methylation of 8-O-methyl-TCM D3 to 9-carboxymethyl-8-O-methyl-TCM D3; and of TCM B3 to 9-carboxymethyl-TCM B3.</text>
</comment>
<comment type="pathway">
    <text>Antibiotic biosynthesis; tetracenomycin C biosynthesis.</text>
</comment>
<comment type="sequence caution" evidence="1">
    <conflict type="erroneous initiation">
        <sequence resource="EMBL-CDS" id="AAA67510"/>
    </conflict>
</comment>
<proteinExistence type="predicted"/>
<keyword id="KW-0045">Antibiotic biosynthesis</keyword>
<keyword id="KW-0489">Methyltransferase</keyword>
<keyword id="KW-0808">Transferase</keyword>
<gene>
    <name type="primary">tcmP</name>
</gene>
<reference key="1">
    <citation type="journal article" date="1993" name="J. Bacteriol.">
        <title>Nucleotide sequences and heterologous expression of tcmG and tcmP, biosynthetic genes for tetracenomycin C in Streptomyces glaucescens.</title>
        <authorList>
            <person name="Decker H."/>
            <person name="Motamedi H."/>
            <person name="Hutchinson C.R."/>
        </authorList>
    </citation>
    <scope>NUCLEOTIDE SEQUENCE [GENOMIC DNA]</scope>
    <source>
        <strain>DSM 40716 / ETH 22794 / Tue 49</strain>
    </source>
</reference>
<evidence type="ECO:0000305" key="1"/>
<sequence>MGETIRLTGVHETLLATLQARALDNRQPRPVLGDATAEELLRRIDYDFSRIRTATKDMRIVTFRARKLDEWAGRFLAVHPDAVVLHLACGLDSRAFRMDVPDTVEWIDVDVPDVIELRSRLYPERDGYRMIGASVTTEDWLDTVPRNRPALVVAEGLTPYLREADGEEMLRRVIRHLPTGAVMFDAVLPWTLRFAKYSQLLRATGATFGWGIGNPRSLESRVPGLRFQEQWSMLDSPFLADARPVEKWVGAGMRSIPQLRFAHRLLRYTF</sequence>
<protein>
    <recommendedName>
        <fullName>Tetracenomycin polyketide synthesis O-methyltransferase TcmP</fullName>
        <ecNumber>2.1.1.-</ecNumber>
    </recommendedName>
</protein>
<organism>
    <name type="scientific">Streptomyces glaucescens</name>
    <dbReference type="NCBI Taxonomy" id="1907"/>
    <lineage>
        <taxon>Bacteria</taxon>
        <taxon>Bacillati</taxon>
        <taxon>Actinomycetota</taxon>
        <taxon>Actinomycetes</taxon>
        <taxon>Kitasatosporales</taxon>
        <taxon>Streptomycetaceae</taxon>
        <taxon>Streptomyces</taxon>
    </lineage>
</organism>